<evidence type="ECO:0000255" key="1">
    <source>
        <dbReference type="HAMAP-Rule" id="MF_00600"/>
    </source>
</evidence>
<organism>
    <name type="scientific">Rhodopseudomonas palustris (strain ATCC BAA-98 / CGA009)</name>
    <dbReference type="NCBI Taxonomy" id="258594"/>
    <lineage>
        <taxon>Bacteria</taxon>
        <taxon>Pseudomonadati</taxon>
        <taxon>Pseudomonadota</taxon>
        <taxon>Alphaproteobacteria</taxon>
        <taxon>Hyphomicrobiales</taxon>
        <taxon>Nitrobacteraceae</taxon>
        <taxon>Rhodopseudomonas</taxon>
    </lineage>
</organism>
<dbReference type="EC" id="5.6.1.7" evidence="1"/>
<dbReference type="EMBL" id="BX572596">
    <property type="protein sequence ID" value="CAE26583.1"/>
    <property type="molecule type" value="Genomic_DNA"/>
</dbReference>
<dbReference type="RefSeq" id="WP_011156704.1">
    <property type="nucleotide sequence ID" value="NZ_CP116810.1"/>
</dbReference>
<dbReference type="SMR" id="P60364"/>
<dbReference type="STRING" id="258594.RPA1140"/>
<dbReference type="GeneID" id="66892161"/>
<dbReference type="eggNOG" id="COG0459">
    <property type="taxonomic scope" value="Bacteria"/>
</dbReference>
<dbReference type="HOGENOM" id="CLU_016503_3_0_5"/>
<dbReference type="PhylomeDB" id="P60364"/>
<dbReference type="GO" id="GO:0005737">
    <property type="term" value="C:cytoplasm"/>
    <property type="evidence" value="ECO:0007669"/>
    <property type="project" value="UniProtKB-SubCell"/>
</dbReference>
<dbReference type="GO" id="GO:0005524">
    <property type="term" value="F:ATP binding"/>
    <property type="evidence" value="ECO:0007669"/>
    <property type="project" value="UniProtKB-UniRule"/>
</dbReference>
<dbReference type="GO" id="GO:0140662">
    <property type="term" value="F:ATP-dependent protein folding chaperone"/>
    <property type="evidence" value="ECO:0007669"/>
    <property type="project" value="InterPro"/>
</dbReference>
<dbReference type="GO" id="GO:0016853">
    <property type="term" value="F:isomerase activity"/>
    <property type="evidence" value="ECO:0007669"/>
    <property type="project" value="UniProtKB-KW"/>
</dbReference>
<dbReference type="GO" id="GO:0051082">
    <property type="term" value="F:unfolded protein binding"/>
    <property type="evidence" value="ECO:0007669"/>
    <property type="project" value="UniProtKB-UniRule"/>
</dbReference>
<dbReference type="GO" id="GO:0042026">
    <property type="term" value="P:protein refolding"/>
    <property type="evidence" value="ECO:0007669"/>
    <property type="project" value="UniProtKB-UniRule"/>
</dbReference>
<dbReference type="CDD" id="cd03344">
    <property type="entry name" value="GroEL"/>
    <property type="match status" value="1"/>
</dbReference>
<dbReference type="FunFam" id="1.10.560.10:FF:000001">
    <property type="entry name" value="60 kDa chaperonin"/>
    <property type="match status" value="1"/>
</dbReference>
<dbReference type="FunFam" id="3.50.7.10:FF:000001">
    <property type="entry name" value="60 kDa chaperonin"/>
    <property type="match status" value="1"/>
</dbReference>
<dbReference type="Gene3D" id="3.50.7.10">
    <property type="entry name" value="GroEL"/>
    <property type="match status" value="1"/>
</dbReference>
<dbReference type="Gene3D" id="1.10.560.10">
    <property type="entry name" value="GroEL-like equatorial domain"/>
    <property type="match status" value="1"/>
</dbReference>
<dbReference type="Gene3D" id="3.30.260.10">
    <property type="entry name" value="TCP-1-like chaperonin intermediate domain"/>
    <property type="match status" value="1"/>
</dbReference>
<dbReference type="HAMAP" id="MF_00600">
    <property type="entry name" value="CH60"/>
    <property type="match status" value="1"/>
</dbReference>
<dbReference type="InterPro" id="IPR018370">
    <property type="entry name" value="Chaperonin_Cpn60_CS"/>
</dbReference>
<dbReference type="InterPro" id="IPR001844">
    <property type="entry name" value="Cpn60/GroEL"/>
</dbReference>
<dbReference type="InterPro" id="IPR002423">
    <property type="entry name" value="Cpn60/GroEL/TCP-1"/>
</dbReference>
<dbReference type="InterPro" id="IPR027409">
    <property type="entry name" value="GroEL-like_apical_dom_sf"/>
</dbReference>
<dbReference type="InterPro" id="IPR027413">
    <property type="entry name" value="GROEL-like_equatorial_sf"/>
</dbReference>
<dbReference type="InterPro" id="IPR027410">
    <property type="entry name" value="TCP-1-like_intermed_sf"/>
</dbReference>
<dbReference type="NCBIfam" id="TIGR02348">
    <property type="entry name" value="GroEL"/>
    <property type="match status" value="1"/>
</dbReference>
<dbReference type="NCBIfam" id="NF000592">
    <property type="entry name" value="PRK00013.1"/>
    <property type="match status" value="1"/>
</dbReference>
<dbReference type="NCBIfam" id="NF009487">
    <property type="entry name" value="PRK12849.1"/>
    <property type="match status" value="1"/>
</dbReference>
<dbReference type="NCBIfam" id="NF009488">
    <property type="entry name" value="PRK12850.1"/>
    <property type="match status" value="1"/>
</dbReference>
<dbReference type="NCBIfam" id="NF009489">
    <property type="entry name" value="PRK12851.1"/>
    <property type="match status" value="1"/>
</dbReference>
<dbReference type="PANTHER" id="PTHR45633">
    <property type="entry name" value="60 KDA HEAT SHOCK PROTEIN, MITOCHONDRIAL"/>
    <property type="match status" value="1"/>
</dbReference>
<dbReference type="Pfam" id="PF00118">
    <property type="entry name" value="Cpn60_TCP1"/>
    <property type="match status" value="1"/>
</dbReference>
<dbReference type="PRINTS" id="PR00298">
    <property type="entry name" value="CHAPERONIN60"/>
</dbReference>
<dbReference type="SUPFAM" id="SSF52029">
    <property type="entry name" value="GroEL apical domain-like"/>
    <property type="match status" value="1"/>
</dbReference>
<dbReference type="SUPFAM" id="SSF48592">
    <property type="entry name" value="GroEL equatorial domain-like"/>
    <property type="match status" value="1"/>
</dbReference>
<dbReference type="SUPFAM" id="SSF54849">
    <property type="entry name" value="GroEL-intermediate domain like"/>
    <property type="match status" value="1"/>
</dbReference>
<dbReference type="PROSITE" id="PS00296">
    <property type="entry name" value="CHAPERONINS_CPN60"/>
    <property type="match status" value="1"/>
</dbReference>
<sequence>MAAKDVKFSGDARDRMLRGVDVLANAVKVTLGPKGRNVLIEKSFGAPRITKDGVTVAKEVELEDKFENMGAQMVREVASKTNDLAGDGTTTATVLAQAIVREGAKAVAAGMNPMDLKRGIEIAVAAVVKDIQKRAKPVASSAEIAQVGTISANGDAPIGKMIAQAMQKVGNEGVITVEENKSLETEVDIVEGMKFDRGYLSPYFVTNAEKMTVELDDAYILLHEKKLSGLQSMLPVLEAVVQSGKPLLIIAEDVEGEALATLVVNRLRGGLKVSAVKAPGFGDRRKAMLEDIAILTGGQLISEDLGIKLETVTLKMLGRAKKVVIDKENTTIVNGAGKKPEIEARVSQIKAQIEETSSDYDREKLQERLAKLAGGVAVIRVGGATEVEVKEKKDRVEDALNATRAAVQEGIVPGGGVALLRAKKAVGRISNDNPDVQAGINIVLKALEAPIRQIAENAGVEGSIVVGKILENKTETFGFDAQTEEYVDMLAKGIVDPAKVVRTALQDASSVASLLVTTEAMVAELPKADAPAMPAGGGMGGMGGMGF</sequence>
<feature type="chain" id="PRO_0000063509" description="Chaperonin GroEL 1">
    <location>
        <begin position="1"/>
        <end position="547"/>
    </location>
</feature>
<feature type="binding site" evidence="1">
    <location>
        <begin position="30"/>
        <end position="33"/>
    </location>
    <ligand>
        <name>ATP</name>
        <dbReference type="ChEBI" id="CHEBI:30616"/>
    </ligand>
</feature>
<feature type="binding site" evidence="1">
    <location>
        <position position="51"/>
    </location>
    <ligand>
        <name>ATP</name>
        <dbReference type="ChEBI" id="CHEBI:30616"/>
    </ligand>
</feature>
<feature type="binding site" evidence="1">
    <location>
        <begin position="87"/>
        <end position="91"/>
    </location>
    <ligand>
        <name>ATP</name>
        <dbReference type="ChEBI" id="CHEBI:30616"/>
    </ligand>
</feature>
<feature type="binding site" evidence="1">
    <location>
        <position position="415"/>
    </location>
    <ligand>
        <name>ATP</name>
        <dbReference type="ChEBI" id="CHEBI:30616"/>
    </ligand>
</feature>
<feature type="binding site" evidence="1">
    <location>
        <position position="496"/>
    </location>
    <ligand>
        <name>ATP</name>
        <dbReference type="ChEBI" id="CHEBI:30616"/>
    </ligand>
</feature>
<reference key="1">
    <citation type="journal article" date="2004" name="Nat. Biotechnol.">
        <title>Complete genome sequence of the metabolically versatile photosynthetic bacterium Rhodopseudomonas palustris.</title>
        <authorList>
            <person name="Larimer F.W."/>
            <person name="Chain P."/>
            <person name="Hauser L."/>
            <person name="Lamerdin J.E."/>
            <person name="Malfatti S."/>
            <person name="Do L."/>
            <person name="Land M.L."/>
            <person name="Pelletier D.A."/>
            <person name="Beatty J.T."/>
            <person name="Lang A.S."/>
            <person name="Tabita F.R."/>
            <person name="Gibson J.L."/>
            <person name="Hanson T.E."/>
            <person name="Bobst C."/>
            <person name="Torres y Torres J.L."/>
            <person name="Peres C."/>
            <person name="Harrison F.H."/>
            <person name="Gibson J."/>
            <person name="Harwood C.S."/>
        </authorList>
    </citation>
    <scope>NUCLEOTIDE SEQUENCE [LARGE SCALE GENOMIC DNA]</scope>
    <source>
        <strain>ATCC BAA-98 / CGA009</strain>
    </source>
</reference>
<protein>
    <recommendedName>
        <fullName evidence="1">Chaperonin GroEL 1</fullName>
        <ecNumber evidence="1">5.6.1.7</ecNumber>
    </recommendedName>
    <alternativeName>
        <fullName evidence="1">60 kDa chaperonin 1</fullName>
    </alternativeName>
    <alternativeName>
        <fullName evidence="1">Chaperonin-60 1</fullName>
        <shortName evidence="1">Cpn60 1</shortName>
    </alternativeName>
</protein>
<proteinExistence type="inferred from homology"/>
<accession>P60364</accession>
<comment type="function">
    <text evidence="1">Together with its co-chaperonin GroES, plays an essential role in assisting protein folding. The GroEL-GroES system forms a nano-cage that allows encapsulation of the non-native substrate proteins and provides a physical environment optimized to promote and accelerate protein folding.</text>
</comment>
<comment type="catalytic activity">
    <reaction evidence="1">
        <text>ATP + H2O + a folded polypeptide = ADP + phosphate + an unfolded polypeptide.</text>
        <dbReference type="EC" id="5.6.1.7"/>
    </reaction>
</comment>
<comment type="subunit">
    <text evidence="1">Forms a cylinder of 14 subunits composed of two heptameric rings stacked back-to-back. Interacts with the co-chaperonin GroES.</text>
</comment>
<comment type="subcellular location">
    <subcellularLocation>
        <location evidence="1">Cytoplasm</location>
    </subcellularLocation>
</comment>
<comment type="similarity">
    <text evidence="1">Belongs to the chaperonin (HSP60) family.</text>
</comment>
<keyword id="KW-0067">ATP-binding</keyword>
<keyword id="KW-0143">Chaperone</keyword>
<keyword id="KW-0963">Cytoplasm</keyword>
<keyword id="KW-0413">Isomerase</keyword>
<keyword id="KW-0547">Nucleotide-binding</keyword>
<name>CH601_RHOPA</name>
<gene>
    <name evidence="1" type="primary">groEL1</name>
    <name evidence="1" type="synonym">groL1</name>
    <name type="ordered locus">RPA1140</name>
</gene>